<feature type="chain" id="PRO_1000213221" description="Imidazole glycerol phosphate synthase subunit HisF">
    <location>
        <begin position="1"/>
        <end position="259"/>
    </location>
</feature>
<feature type="active site" evidence="1">
    <location>
        <position position="11"/>
    </location>
</feature>
<feature type="active site" evidence="1">
    <location>
        <position position="130"/>
    </location>
</feature>
<name>HIS6_VARPS</name>
<sequence>MLAKRIIPCLDVTGGRVVKGVNFLELRDAGDPVEIAARYNAQGADELTFLDITATSDGRDLILPIIEAVASQVFIPLTVGGGVRTVADVRRLLNAGADKTSFNSAAIADPQVINDASQKYGSQCIVVAIDAKRRSPEEAATRGAGWDVYSHGGRKNTGLDAVEWATEMVRRGAGEILLTSMDRDGTKSGFDLALTRAVSDAVNVPVIASGGVGSLDDLADGIQTGGADAVLAASIFHYGEHTVGEAKARMAARGIPVRT</sequence>
<evidence type="ECO:0000255" key="1">
    <source>
        <dbReference type="HAMAP-Rule" id="MF_01013"/>
    </source>
</evidence>
<dbReference type="EC" id="4.3.2.10" evidence="1"/>
<dbReference type="EMBL" id="CP001635">
    <property type="protein sequence ID" value="ACS17826.1"/>
    <property type="molecule type" value="Genomic_DNA"/>
</dbReference>
<dbReference type="SMR" id="C5CQK0"/>
<dbReference type="STRING" id="543728.Vapar_1175"/>
<dbReference type="KEGG" id="vap:Vapar_1175"/>
<dbReference type="eggNOG" id="COG0107">
    <property type="taxonomic scope" value="Bacteria"/>
</dbReference>
<dbReference type="HOGENOM" id="CLU_048577_4_0_4"/>
<dbReference type="OrthoDB" id="9781903at2"/>
<dbReference type="UniPathway" id="UPA00031">
    <property type="reaction ID" value="UER00010"/>
</dbReference>
<dbReference type="GO" id="GO:0005737">
    <property type="term" value="C:cytoplasm"/>
    <property type="evidence" value="ECO:0007669"/>
    <property type="project" value="UniProtKB-SubCell"/>
</dbReference>
<dbReference type="GO" id="GO:0000107">
    <property type="term" value="F:imidazoleglycerol-phosphate synthase activity"/>
    <property type="evidence" value="ECO:0007669"/>
    <property type="project" value="UniProtKB-UniRule"/>
</dbReference>
<dbReference type="GO" id="GO:0016829">
    <property type="term" value="F:lyase activity"/>
    <property type="evidence" value="ECO:0007669"/>
    <property type="project" value="UniProtKB-KW"/>
</dbReference>
<dbReference type="GO" id="GO:0000105">
    <property type="term" value="P:L-histidine biosynthetic process"/>
    <property type="evidence" value="ECO:0007669"/>
    <property type="project" value="UniProtKB-UniRule"/>
</dbReference>
<dbReference type="CDD" id="cd04731">
    <property type="entry name" value="HisF"/>
    <property type="match status" value="1"/>
</dbReference>
<dbReference type="FunFam" id="3.20.20.70:FF:000006">
    <property type="entry name" value="Imidazole glycerol phosphate synthase subunit HisF"/>
    <property type="match status" value="1"/>
</dbReference>
<dbReference type="Gene3D" id="3.20.20.70">
    <property type="entry name" value="Aldolase class I"/>
    <property type="match status" value="1"/>
</dbReference>
<dbReference type="HAMAP" id="MF_01013">
    <property type="entry name" value="HisF"/>
    <property type="match status" value="1"/>
</dbReference>
<dbReference type="InterPro" id="IPR013785">
    <property type="entry name" value="Aldolase_TIM"/>
</dbReference>
<dbReference type="InterPro" id="IPR006062">
    <property type="entry name" value="His_biosynth"/>
</dbReference>
<dbReference type="InterPro" id="IPR004651">
    <property type="entry name" value="HisF"/>
</dbReference>
<dbReference type="InterPro" id="IPR050064">
    <property type="entry name" value="IGPS_HisA/HisF"/>
</dbReference>
<dbReference type="InterPro" id="IPR011060">
    <property type="entry name" value="RibuloseP-bd_barrel"/>
</dbReference>
<dbReference type="NCBIfam" id="TIGR00735">
    <property type="entry name" value="hisF"/>
    <property type="match status" value="1"/>
</dbReference>
<dbReference type="PANTHER" id="PTHR21235:SF2">
    <property type="entry name" value="IMIDAZOLE GLYCEROL PHOSPHATE SYNTHASE HISHF"/>
    <property type="match status" value="1"/>
</dbReference>
<dbReference type="PANTHER" id="PTHR21235">
    <property type="entry name" value="IMIDAZOLE GLYCEROL PHOSPHATE SYNTHASE SUBUNIT HISF/H IGP SYNTHASE SUBUNIT HISF/H"/>
    <property type="match status" value="1"/>
</dbReference>
<dbReference type="Pfam" id="PF00977">
    <property type="entry name" value="His_biosynth"/>
    <property type="match status" value="1"/>
</dbReference>
<dbReference type="SUPFAM" id="SSF51366">
    <property type="entry name" value="Ribulose-phoshate binding barrel"/>
    <property type="match status" value="1"/>
</dbReference>
<organism>
    <name type="scientific">Variovorax paradoxus (strain S110)</name>
    <dbReference type="NCBI Taxonomy" id="543728"/>
    <lineage>
        <taxon>Bacteria</taxon>
        <taxon>Pseudomonadati</taxon>
        <taxon>Pseudomonadota</taxon>
        <taxon>Betaproteobacteria</taxon>
        <taxon>Burkholderiales</taxon>
        <taxon>Comamonadaceae</taxon>
        <taxon>Variovorax</taxon>
    </lineage>
</organism>
<reference key="1">
    <citation type="journal article" date="2011" name="J. Bacteriol.">
        <title>Complete genome sequence of the metabolically versatile plant growth-promoting endophyte, Variovorax paradoxus S110.</title>
        <authorList>
            <person name="Han J.I."/>
            <person name="Choi H.K."/>
            <person name="Lee S.W."/>
            <person name="Orwin P.M."/>
            <person name="Kim J."/>
            <person name="Laroe S.L."/>
            <person name="Kim T.G."/>
            <person name="O'Neil J."/>
            <person name="Leadbetter J.R."/>
            <person name="Lee S.Y."/>
            <person name="Hur C.G."/>
            <person name="Spain J.C."/>
            <person name="Ovchinnikova G."/>
            <person name="Goodwin L."/>
            <person name="Han C."/>
        </authorList>
    </citation>
    <scope>NUCLEOTIDE SEQUENCE [LARGE SCALE GENOMIC DNA]</scope>
    <source>
        <strain>S110</strain>
    </source>
</reference>
<protein>
    <recommendedName>
        <fullName evidence="1">Imidazole glycerol phosphate synthase subunit HisF</fullName>
        <ecNumber evidence="1">4.3.2.10</ecNumber>
    </recommendedName>
    <alternativeName>
        <fullName evidence="1">IGP synthase cyclase subunit</fullName>
    </alternativeName>
    <alternativeName>
        <fullName evidence="1">IGP synthase subunit HisF</fullName>
    </alternativeName>
    <alternativeName>
        <fullName evidence="1">ImGP synthase subunit HisF</fullName>
        <shortName evidence="1">IGPS subunit HisF</shortName>
    </alternativeName>
</protein>
<gene>
    <name evidence="1" type="primary">hisF</name>
    <name type="ordered locus">Vapar_1175</name>
</gene>
<comment type="function">
    <text evidence="1">IGPS catalyzes the conversion of PRFAR and glutamine to IGP, AICAR and glutamate. The HisF subunit catalyzes the cyclization activity that produces IGP and AICAR from PRFAR using the ammonia provided by the HisH subunit.</text>
</comment>
<comment type="catalytic activity">
    <reaction evidence="1">
        <text>5-[(5-phospho-1-deoxy-D-ribulos-1-ylimino)methylamino]-1-(5-phospho-beta-D-ribosyl)imidazole-4-carboxamide + L-glutamine = D-erythro-1-(imidazol-4-yl)glycerol 3-phosphate + 5-amino-1-(5-phospho-beta-D-ribosyl)imidazole-4-carboxamide + L-glutamate + H(+)</text>
        <dbReference type="Rhea" id="RHEA:24793"/>
        <dbReference type="ChEBI" id="CHEBI:15378"/>
        <dbReference type="ChEBI" id="CHEBI:29985"/>
        <dbReference type="ChEBI" id="CHEBI:58278"/>
        <dbReference type="ChEBI" id="CHEBI:58359"/>
        <dbReference type="ChEBI" id="CHEBI:58475"/>
        <dbReference type="ChEBI" id="CHEBI:58525"/>
        <dbReference type="EC" id="4.3.2.10"/>
    </reaction>
</comment>
<comment type="pathway">
    <text evidence="1">Amino-acid biosynthesis; L-histidine biosynthesis; L-histidine from 5-phospho-alpha-D-ribose 1-diphosphate: step 5/9.</text>
</comment>
<comment type="subunit">
    <text evidence="1">Heterodimer of HisH and HisF.</text>
</comment>
<comment type="subcellular location">
    <subcellularLocation>
        <location evidence="1">Cytoplasm</location>
    </subcellularLocation>
</comment>
<comment type="similarity">
    <text evidence="1">Belongs to the HisA/HisF family.</text>
</comment>
<proteinExistence type="inferred from homology"/>
<keyword id="KW-0028">Amino-acid biosynthesis</keyword>
<keyword id="KW-0963">Cytoplasm</keyword>
<keyword id="KW-0368">Histidine biosynthesis</keyword>
<keyword id="KW-0456">Lyase</keyword>
<accession>C5CQK0</accession>